<protein>
    <recommendedName>
        <fullName evidence="1">Arginine biosynthesis bifunctional protein ArgJ</fullName>
    </recommendedName>
    <domain>
        <recommendedName>
            <fullName evidence="1">Glutamate N-acetyltransferase</fullName>
            <ecNumber evidence="1">2.3.1.35</ecNumber>
        </recommendedName>
        <alternativeName>
            <fullName evidence="1">Ornithine acetyltransferase</fullName>
            <shortName evidence="1">OATase</shortName>
        </alternativeName>
        <alternativeName>
            <fullName evidence="1">Ornithine transacetylase</fullName>
        </alternativeName>
    </domain>
    <domain>
        <recommendedName>
            <fullName evidence="1">Amino-acid acetyltransferase</fullName>
            <ecNumber evidence="1">2.3.1.1</ecNumber>
        </recommendedName>
        <alternativeName>
            <fullName evidence="1">N-acetylglutamate synthase</fullName>
            <shortName evidence="1">AGSase</shortName>
        </alternativeName>
    </domain>
    <component>
        <recommendedName>
            <fullName evidence="1">Arginine biosynthesis bifunctional protein ArgJ alpha chain</fullName>
        </recommendedName>
    </component>
    <component>
        <recommendedName>
            <fullName evidence="1">Arginine biosynthesis bifunctional protein ArgJ beta chain</fullName>
        </recommendedName>
    </component>
</protein>
<accession>Q8NYM7</accession>
<proteinExistence type="inferred from homology"/>
<evidence type="ECO:0000255" key="1">
    <source>
        <dbReference type="HAMAP-Rule" id="MF_01106"/>
    </source>
</evidence>
<sequence length="413" mass="44400">MKHQETTSQQYNFSIIKHGDISTPQGFTAGGMHIGLRANKKDFGWIYSSSLASAAAVYTLNQFKAAPLIVTEDTLQKSKGKLQALVVNSANANSCTGQQGIDDARQTQTWVAQQLQIPSEHVAVASTGVIGEYLPMDKIKTGTEHIKDANFATPGAFNEAILTTDTCTKHIAVSLKIDGKTVTIGGSTKGSGMIHPNMATMLAFITTDASIESNTLHQLLKSSTDHTFNMITVDGDTSTNDMVLVMANHQVEHQILSQDHPQWETFVDAFNFVCTFLAKAIARDGEGATKLISVNVSGAKSISDARKIGKTIVSSNLVKSAIFGEDANFGRIITAIGYSGCEIDPNCTYVQLNQIPVVDKGMAVLFDEQAMSNTLTHENVTIDVQLGLGNAAATAYGCDLSYDYVRINASYRT</sequence>
<comment type="function">
    <text evidence="1">Catalyzes two activities which are involved in the cyclic version of arginine biosynthesis: the synthesis of N-acetylglutamate from glutamate and acetyl-CoA as the acetyl donor, and of ornithine by transacetylation between N(2)-acetylornithine and glutamate.</text>
</comment>
<comment type="catalytic activity">
    <reaction evidence="1">
        <text>N(2)-acetyl-L-ornithine + L-glutamate = N-acetyl-L-glutamate + L-ornithine</text>
        <dbReference type="Rhea" id="RHEA:15349"/>
        <dbReference type="ChEBI" id="CHEBI:29985"/>
        <dbReference type="ChEBI" id="CHEBI:44337"/>
        <dbReference type="ChEBI" id="CHEBI:46911"/>
        <dbReference type="ChEBI" id="CHEBI:57805"/>
        <dbReference type="EC" id="2.3.1.35"/>
    </reaction>
</comment>
<comment type="catalytic activity">
    <reaction evidence="1">
        <text>L-glutamate + acetyl-CoA = N-acetyl-L-glutamate + CoA + H(+)</text>
        <dbReference type="Rhea" id="RHEA:24292"/>
        <dbReference type="ChEBI" id="CHEBI:15378"/>
        <dbReference type="ChEBI" id="CHEBI:29985"/>
        <dbReference type="ChEBI" id="CHEBI:44337"/>
        <dbReference type="ChEBI" id="CHEBI:57287"/>
        <dbReference type="ChEBI" id="CHEBI:57288"/>
        <dbReference type="EC" id="2.3.1.1"/>
    </reaction>
</comment>
<comment type="pathway">
    <text evidence="1">Amino-acid biosynthesis; L-arginine biosynthesis; L-ornithine and N-acetyl-L-glutamate from L-glutamate and N(2)-acetyl-L-ornithine (cyclic): step 1/1.</text>
</comment>
<comment type="pathway">
    <text evidence="1">Amino-acid biosynthesis; L-arginine biosynthesis; N(2)-acetyl-L-ornithine from L-glutamate: step 1/4.</text>
</comment>
<comment type="subunit">
    <text evidence="1">Heterotetramer of two alpha and two beta chains.</text>
</comment>
<comment type="subcellular location">
    <subcellularLocation>
        <location evidence="1">Cytoplasm</location>
    </subcellularLocation>
</comment>
<comment type="similarity">
    <text evidence="1">Belongs to the ArgJ family.</text>
</comment>
<organism>
    <name type="scientific">Staphylococcus aureus (strain MW2)</name>
    <dbReference type="NCBI Taxonomy" id="196620"/>
    <lineage>
        <taxon>Bacteria</taxon>
        <taxon>Bacillati</taxon>
        <taxon>Bacillota</taxon>
        <taxon>Bacilli</taxon>
        <taxon>Bacillales</taxon>
        <taxon>Staphylococcaceae</taxon>
        <taxon>Staphylococcus</taxon>
    </lineage>
</organism>
<keyword id="KW-0012">Acyltransferase</keyword>
<keyword id="KW-0028">Amino-acid biosynthesis</keyword>
<keyword id="KW-0055">Arginine biosynthesis</keyword>
<keyword id="KW-0068">Autocatalytic cleavage</keyword>
<keyword id="KW-0963">Cytoplasm</keyword>
<keyword id="KW-0511">Multifunctional enzyme</keyword>
<keyword id="KW-0808">Transferase</keyword>
<dbReference type="EC" id="2.3.1.35" evidence="1"/>
<dbReference type="EC" id="2.3.1.1" evidence="1"/>
<dbReference type="EMBL" id="BA000033">
    <property type="protein sequence ID" value="BAB94022.1"/>
    <property type="molecule type" value="Genomic_DNA"/>
</dbReference>
<dbReference type="RefSeq" id="WP_000682611.1">
    <property type="nucleotide sequence ID" value="NC_003923.1"/>
</dbReference>
<dbReference type="SMR" id="Q8NYM7"/>
<dbReference type="MEROPS" id="T05.002"/>
<dbReference type="KEGG" id="sam:MW0157"/>
<dbReference type="HOGENOM" id="CLU_027172_1_0_9"/>
<dbReference type="UniPathway" id="UPA00068">
    <property type="reaction ID" value="UER00106"/>
</dbReference>
<dbReference type="UniPathway" id="UPA00068">
    <property type="reaction ID" value="UER00111"/>
</dbReference>
<dbReference type="GO" id="GO:0005737">
    <property type="term" value="C:cytoplasm"/>
    <property type="evidence" value="ECO:0007669"/>
    <property type="project" value="UniProtKB-SubCell"/>
</dbReference>
<dbReference type="GO" id="GO:0004358">
    <property type="term" value="F:glutamate N-acetyltransferase activity"/>
    <property type="evidence" value="ECO:0007669"/>
    <property type="project" value="UniProtKB-UniRule"/>
</dbReference>
<dbReference type="GO" id="GO:0004042">
    <property type="term" value="F:L-glutamate N-acetyltransferase activity"/>
    <property type="evidence" value="ECO:0007669"/>
    <property type="project" value="UniProtKB-UniRule"/>
</dbReference>
<dbReference type="GO" id="GO:0006526">
    <property type="term" value="P:L-arginine biosynthetic process"/>
    <property type="evidence" value="ECO:0007669"/>
    <property type="project" value="UniProtKB-UniRule"/>
</dbReference>
<dbReference type="GO" id="GO:0006592">
    <property type="term" value="P:ornithine biosynthetic process"/>
    <property type="evidence" value="ECO:0007669"/>
    <property type="project" value="TreeGrafter"/>
</dbReference>
<dbReference type="CDD" id="cd02152">
    <property type="entry name" value="OAT"/>
    <property type="match status" value="1"/>
</dbReference>
<dbReference type="FunFam" id="3.10.20.340:FF:000001">
    <property type="entry name" value="Arginine biosynthesis bifunctional protein ArgJ, chloroplastic"/>
    <property type="match status" value="1"/>
</dbReference>
<dbReference type="FunFam" id="3.60.70.12:FF:000001">
    <property type="entry name" value="Arginine biosynthesis bifunctional protein ArgJ, chloroplastic"/>
    <property type="match status" value="1"/>
</dbReference>
<dbReference type="FunFam" id="3.30.2330.10:FF:000001">
    <property type="entry name" value="Arginine biosynthesis bifunctional protein ArgJ, mitochondrial"/>
    <property type="match status" value="1"/>
</dbReference>
<dbReference type="Gene3D" id="3.30.2330.10">
    <property type="entry name" value="arginine biosynthesis bifunctional protein suprefamily"/>
    <property type="match status" value="1"/>
</dbReference>
<dbReference type="Gene3D" id="3.10.20.340">
    <property type="entry name" value="ArgJ beta chain, C-terminal domain"/>
    <property type="match status" value="1"/>
</dbReference>
<dbReference type="Gene3D" id="3.60.70.12">
    <property type="entry name" value="L-amino peptidase D-ALA esterase/amidase"/>
    <property type="match status" value="1"/>
</dbReference>
<dbReference type="HAMAP" id="MF_01106">
    <property type="entry name" value="ArgJ"/>
    <property type="match status" value="1"/>
</dbReference>
<dbReference type="InterPro" id="IPR002813">
    <property type="entry name" value="Arg_biosynth_ArgJ"/>
</dbReference>
<dbReference type="InterPro" id="IPR016117">
    <property type="entry name" value="ArgJ-like_dom_sf"/>
</dbReference>
<dbReference type="InterPro" id="IPR042195">
    <property type="entry name" value="ArgJ_beta_C"/>
</dbReference>
<dbReference type="NCBIfam" id="TIGR00120">
    <property type="entry name" value="ArgJ"/>
    <property type="match status" value="1"/>
</dbReference>
<dbReference type="NCBIfam" id="NF003802">
    <property type="entry name" value="PRK05388.1"/>
    <property type="match status" value="1"/>
</dbReference>
<dbReference type="PANTHER" id="PTHR23100">
    <property type="entry name" value="ARGININE BIOSYNTHESIS BIFUNCTIONAL PROTEIN ARGJ"/>
    <property type="match status" value="1"/>
</dbReference>
<dbReference type="PANTHER" id="PTHR23100:SF0">
    <property type="entry name" value="ARGININE BIOSYNTHESIS BIFUNCTIONAL PROTEIN ARGJ, MITOCHONDRIAL"/>
    <property type="match status" value="1"/>
</dbReference>
<dbReference type="Pfam" id="PF01960">
    <property type="entry name" value="ArgJ"/>
    <property type="match status" value="1"/>
</dbReference>
<dbReference type="SUPFAM" id="SSF56266">
    <property type="entry name" value="DmpA/ArgJ-like"/>
    <property type="match status" value="1"/>
</dbReference>
<feature type="chain" id="PRO_0000002239" description="Arginine biosynthesis bifunctional protein ArgJ alpha chain" evidence="1">
    <location>
        <begin position="1"/>
        <end position="199"/>
    </location>
</feature>
<feature type="chain" id="PRO_0000002240" description="Arginine biosynthesis bifunctional protein ArgJ beta chain" evidence="1">
    <location>
        <begin position="200"/>
        <end position="413"/>
    </location>
</feature>
<feature type="active site" description="Nucleophile" evidence="1">
    <location>
        <position position="200"/>
    </location>
</feature>
<feature type="binding site" evidence="1">
    <location>
        <position position="163"/>
    </location>
    <ligand>
        <name>substrate</name>
    </ligand>
</feature>
<feature type="binding site" evidence="1">
    <location>
        <position position="189"/>
    </location>
    <ligand>
        <name>substrate</name>
    </ligand>
</feature>
<feature type="binding site" evidence="1">
    <location>
        <position position="200"/>
    </location>
    <ligand>
        <name>substrate</name>
    </ligand>
</feature>
<feature type="binding site" evidence="1">
    <location>
        <position position="286"/>
    </location>
    <ligand>
        <name>substrate</name>
    </ligand>
</feature>
<feature type="binding site" evidence="1">
    <location>
        <position position="408"/>
    </location>
    <ligand>
        <name>substrate</name>
    </ligand>
</feature>
<feature type="binding site" evidence="1">
    <location>
        <position position="413"/>
    </location>
    <ligand>
        <name>substrate</name>
    </ligand>
</feature>
<feature type="site" description="Involved in the stabilization of negative charge on the oxyanion by the formation of the oxyanion hole" evidence="1">
    <location>
        <position position="127"/>
    </location>
</feature>
<feature type="site" description="Involved in the stabilization of negative charge on the oxyanion by the formation of the oxyanion hole" evidence="1">
    <location>
        <position position="128"/>
    </location>
</feature>
<feature type="site" description="Cleavage; by autolysis" evidence="1">
    <location>
        <begin position="199"/>
        <end position="200"/>
    </location>
</feature>
<reference key="1">
    <citation type="journal article" date="2002" name="Lancet">
        <title>Genome and virulence determinants of high virulence community-acquired MRSA.</title>
        <authorList>
            <person name="Baba T."/>
            <person name="Takeuchi F."/>
            <person name="Kuroda M."/>
            <person name="Yuzawa H."/>
            <person name="Aoki K."/>
            <person name="Oguchi A."/>
            <person name="Nagai Y."/>
            <person name="Iwama N."/>
            <person name="Asano K."/>
            <person name="Naimi T."/>
            <person name="Kuroda H."/>
            <person name="Cui L."/>
            <person name="Yamamoto K."/>
            <person name="Hiramatsu K."/>
        </authorList>
    </citation>
    <scope>NUCLEOTIDE SEQUENCE [LARGE SCALE GENOMIC DNA]</scope>
    <source>
        <strain>MW2</strain>
    </source>
</reference>
<name>ARGJ_STAAW</name>
<gene>
    <name evidence="1" type="primary">argJ</name>
    <name type="ordered locus">MW0157</name>
</gene>